<organism>
    <name type="scientific">Acidiphilium cryptum (strain JF-5)</name>
    <dbReference type="NCBI Taxonomy" id="349163"/>
    <lineage>
        <taxon>Bacteria</taxon>
        <taxon>Pseudomonadati</taxon>
        <taxon>Pseudomonadota</taxon>
        <taxon>Alphaproteobacteria</taxon>
        <taxon>Acetobacterales</taxon>
        <taxon>Acidocellaceae</taxon>
        <taxon>Acidiphilium</taxon>
    </lineage>
</organism>
<accession>A5FYE1</accession>
<reference key="1">
    <citation type="submission" date="2007-05" db="EMBL/GenBank/DDBJ databases">
        <title>Complete sequence of chromosome of Acidiphilium cryptum JF-5.</title>
        <authorList>
            <consortium name="US DOE Joint Genome Institute"/>
            <person name="Copeland A."/>
            <person name="Lucas S."/>
            <person name="Lapidus A."/>
            <person name="Barry K."/>
            <person name="Detter J.C."/>
            <person name="Glavina del Rio T."/>
            <person name="Hammon N."/>
            <person name="Israni S."/>
            <person name="Dalin E."/>
            <person name="Tice H."/>
            <person name="Pitluck S."/>
            <person name="Sims D."/>
            <person name="Brettin T."/>
            <person name="Bruce D."/>
            <person name="Han C."/>
            <person name="Schmutz J."/>
            <person name="Larimer F."/>
            <person name="Land M."/>
            <person name="Hauser L."/>
            <person name="Kyrpides N."/>
            <person name="Kim E."/>
            <person name="Magnuson T."/>
            <person name="Richardson P."/>
        </authorList>
    </citation>
    <scope>NUCLEOTIDE SEQUENCE [LARGE SCALE GENOMIC DNA]</scope>
    <source>
        <strain>JF-5</strain>
    </source>
</reference>
<name>HIS7_ACICJ</name>
<evidence type="ECO:0000255" key="1">
    <source>
        <dbReference type="HAMAP-Rule" id="MF_00076"/>
    </source>
</evidence>
<gene>
    <name evidence="1" type="primary">hisB</name>
    <name type="ordered locus">Acry_1413</name>
</gene>
<dbReference type="EC" id="4.2.1.19" evidence="1"/>
<dbReference type="EMBL" id="CP000697">
    <property type="protein sequence ID" value="ABQ30623.1"/>
    <property type="molecule type" value="Genomic_DNA"/>
</dbReference>
<dbReference type="RefSeq" id="WP_011942223.1">
    <property type="nucleotide sequence ID" value="NC_009484.1"/>
</dbReference>
<dbReference type="SMR" id="A5FYE1"/>
<dbReference type="STRING" id="349163.Acry_1413"/>
<dbReference type="KEGG" id="acr:Acry_1413"/>
<dbReference type="eggNOG" id="COG0131">
    <property type="taxonomic scope" value="Bacteria"/>
</dbReference>
<dbReference type="HOGENOM" id="CLU_044308_2_0_5"/>
<dbReference type="UniPathway" id="UPA00031">
    <property type="reaction ID" value="UER00011"/>
</dbReference>
<dbReference type="Proteomes" id="UP000000245">
    <property type="component" value="Chromosome"/>
</dbReference>
<dbReference type="GO" id="GO:0005737">
    <property type="term" value="C:cytoplasm"/>
    <property type="evidence" value="ECO:0007669"/>
    <property type="project" value="UniProtKB-SubCell"/>
</dbReference>
<dbReference type="GO" id="GO:0004424">
    <property type="term" value="F:imidazoleglycerol-phosphate dehydratase activity"/>
    <property type="evidence" value="ECO:0007669"/>
    <property type="project" value="UniProtKB-UniRule"/>
</dbReference>
<dbReference type="GO" id="GO:0000105">
    <property type="term" value="P:L-histidine biosynthetic process"/>
    <property type="evidence" value="ECO:0007669"/>
    <property type="project" value="UniProtKB-UniRule"/>
</dbReference>
<dbReference type="CDD" id="cd07914">
    <property type="entry name" value="IGPD"/>
    <property type="match status" value="1"/>
</dbReference>
<dbReference type="FunFam" id="3.30.230.40:FF:000001">
    <property type="entry name" value="Imidazoleglycerol-phosphate dehydratase HisB"/>
    <property type="match status" value="1"/>
</dbReference>
<dbReference type="FunFam" id="3.30.230.40:FF:000003">
    <property type="entry name" value="Imidazoleglycerol-phosphate dehydratase HisB"/>
    <property type="match status" value="1"/>
</dbReference>
<dbReference type="Gene3D" id="3.30.230.40">
    <property type="entry name" value="Imidazole glycerol phosphate dehydratase, domain 1"/>
    <property type="match status" value="2"/>
</dbReference>
<dbReference type="HAMAP" id="MF_00076">
    <property type="entry name" value="HisB"/>
    <property type="match status" value="1"/>
</dbReference>
<dbReference type="InterPro" id="IPR038494">
    <property type="entry name" value="IGPD_sf"/>
</dbReference>
<dbReference type="InterPro" id="IPR000807">
    <property type="entry name" value="ImidazoleglycerolP_deHydtase"/>
</dbReference>
<dbReference type="InterPro" id="IPR020565">
    <property type="entry name" value="ImidazoleglycerP_deHydtase_CS"/>
</dbReference>
<dbReference type="InterPro" id="IPR020568">
    <property type="entry name" value="Ribosomal_Su5_D2-typ_SF"/>
</dbReference>
<dbReference type="NCBIfam" id="NF002109">
    <property type="entry name" value="PRK00951.1-5"/>
    <property type="match status" value="1"/>
</dbReference>
<dbReference type="NCBIfam" id="NF002111">
    <property type="entry name" value="PRK00951.2-1"/>
    <property type="match status" value="1"/>
</dbReference>
<dbReference type="NCBIfam" id="NF002114">
    <property type="entry name" value="PRK00951.2-4"/>
    <property type="match status" value="1"/>
</dbReference>
<dbReference type="PANTHER" id="PTHR23133:SF2">
    <property type="entry name" value="IMIDAZOLEGLYCEROL-PHOSPHATE DEHYDRATASE"/>
    <property type="match status" value="1"/>
</dbReference>
<dbReference type="PANTHER" id="PTHR23133">
    <property type="entry name" value="IMIDAZOLEGLYCEROL-PHOSPHATE DEHYDRATASE HIS7"/>
    <property type="match status" value="1"/>
</dbReference>
<dbReference type="Pfam" id="PF00475">
    <property type="entry name" value="IGPD"/>
    <property type="match status" value="1"/>
</dbReference>
<dbReference type="SUPFAM" id="SSF54211">
    <property type="entry name" value="Ribosomal protein S5 domain 2-like"/>
    <property type="match status" value="2"/>
</dbReference>
<dbReference type="PROSITE" id="PS00954">
    <property type="entry name" value="IGP_DEHYDRATASE_1"/>
    <property type="match status" value="1"/>
</dbReference>
<dbReference type="PROSITE" id="PS00955">
    <property type="entry name" value="IGP_DEHYDRATASE_2"/>
    <property type="match status" value="1"/>
</dbReference>
<comment type="catalytic activity">
    <reaction evidence="1">
        <text>D-erythro-1-(imidazol-4-yl)glycerol 3-phosphate = 3-(imidazol-4-yl)-2-oxopropyl phosphate + H2O</text>
        <dbReference type="Rhea" id="RHEA:11040"/>
        <dbReference type="ChEBI" id="CHEBI:15377"/>
        <dbReference type="ChEBI" id="CHEBI:57766"/>
        <dbReference type="ChEBI" id="CHEBI:58278"/>
        <dbReference type="EC" id="4.2.1.19"/>
    </reaction>
</comment>
<comment type="pathway">
    <text evidence="1">Amino-acid biosynthesis; L-histidine biosynthesis; L-histidine from 5-phospho-alpha-D-ribose 1-diphosphate: step 6/9.</text>
</comment>
<comment type="subcellular location">
    <subcellularLocation>
        <location evidence="1">Cytoplasm</location>
    </subcellularLocation>
</comment>
<comment type="similarity">
    <text evidence="1">Belongs to the imidazoleglycerol-phosphate dehydratase family.</text>
</comment>
<sequence length="196" mass="20964">MSRTASITRTTSETSIELMLDLDGTGNTDIATGIGFFDHMLTALGRHAMLDLIVRAEGDLHIDAHHTVEDVGIVLGQAIREALGDKRGITRFGFAATPMDEALCEAAIDLSGRGFLVFDVPFERPMLGDMDTQLVQEFFQALTANGGFALHLTRRAGHNAHHVAEAAFKAAARALRMAVEPDPRAAGAIPSTKGVL</sequence>
<proteinExistence type="inferred from homology"/>
<keyword id="KW-0028">Amino-acid biosynthesis</keyword>
<keyword id="KW-0963">Cytoplasm</keyword>
<keyword id="KW-0368">Histidine biosynthesis</keyword>
<keyword id="KW-0456">Lyase</keyword>
<keyword id="KW-1185">Reference proteome</keyword>
<feature type="chain" id="PRO_1000010241" description="Imidazoleglycerol-phosphate dehydratase">
    <location>
        <begin position="1"/>
        <end position="196"/>
    </location>
</feature>
<protein>
    <recommendedName>
        <fullName evidence="1">Imidazoleglycerol-phosphate dehydratase</fullName>
        <shortName evidence="1">IGPD</shortName>
        <ecNumber evidence="1">4.2.1.19</ecNumber>
    </recommendedName>
</protein>